<dbReference type="EC" id="1.13.11.54" evidence="1"/>
<dbReference type="EC" id="1.13.11.53" evidence="1"/>
<dbReference type="EMBL" id="DS772378">
    <property type="protein sequence ID" value="EEC09178.1"/>
    <property type="molecule type" value="Genomic_DNA"/>
</dbReference>
<dbReference type="RefSeq" id="XP_002399605.1">
    <property type="nucleotide sequence ID" value="XM_002399563.1"/>
</dbReference>
<dbReference type="SMR" id="B7PRF6"/>
<dbReference type="FunCoup" id="B7PRF6">
    <property type="interactions" value="352"/>
</dbReference>
<dbReference type="STRING" id="6945.B7PRF6"/>
<dbReference type="PaxDb" id="6945-B7PRF6"/>
<dbReference type="EnsemblMetazoa" id="ISCW007295-RA">
    <property type="protein sequence ID" value="ISCW007295-PA"/>
    <property type="gene ID" value="ISCW007295"/>
</dbReference>
<dbReference type="KEGG" id="isc:8030267"/>
<dbReference type="CTD" id="55256"/>
<dbReference type="VEuPathDB" id="VectorBase:ISCI007295"/>
<dbReference type="VEuPathDB" id="VectorBase:ISCP_007310"/>
<dbReference type="VEuPathDB" id="VectorBase:ISCW007295"/>
<dbReference type="HOGENOM" id="CLU_090154_0_1_1"/>
<dbReference type="InParanoid" id="B7PRF6"/>
<dbReference type="OrthoDB" id="1867259at2759"/>
<dbReference type="UniPathway" id="UPA00904">
    <property type="reaction ID" value="UER00878"/>
</dbReference>
<dbReference type="Proteomes" id="UP000001555">
    <property type="component" value="Unassembled WGS sequence"/>
</dbReference>
<dbReference type="GO" id="GO:0005737">
    <property type="term" value="C:cytoplasm"/>
    <property type="evidence" value="ECO:0007669"/>
    <property type="project" value="UniProtKB-SubCell"/>
</dbReference>
<dbReference type="GO" id="GO:0005634">
    <property type="term" value="C:nucleus"/>
    <property type="evidence" value="ECO:0007669"/>
    <property type="project" value="UniProtKB-SubCell"/>
</dbReference>
<dbReference type="GO" id="GO:0010308">
    <property type="term" value="F:acireductone dioxygenase (Ni2+-requiring) activity"/>
    <property type="evidence" value="ECO:0007669"/>
    <property type="project" value="UniProtKB-UniRule"/>
</dbReference>
<dbReference type="GO" id="GO:0010309">
    <property type="term" value="F:acireductone dioxygenase [iron(II)-requiring] activity"/>
    <property type="evidence" value="ECO:0000318"/>
    <property type="project" value="GO_Central"/>
</dbReference>
<dbReference type="GO" id="GO:0005506">
    <property type="term" value="F:iron ion binding"/>
    <property type="evidence" value="ECO:0007669"/>
    <property type="project" value="UniProtKB-UniRule"/>
</dbReference>
<dbReference type="GO" id="GO:0016151">
    <property type="term" value="F:nickel cation binding"/>
    <property type="evidence" value="ECO:0007669"/>
    <property type="project" value="UniProtKB-UniRule"/>
</dbReference>
<dbReference type="GO" id="GO:0019509">
    <property type="term" value="P:L-methionine salvage from methylthioadenosine"/>
    <property type="evidence" value="ECO:0007669"/>
    <property type="project" value="UniProtKB-UniRule"/>
</dbReference>
<dbReference type="GO" id="GO:0006555">
    <property type="term" value="P:methionine metabolic process"/>
    <property type="evidence" value="ECO:0000318"/>
    <property type="project" value="GO_Central"/>
</dbReference>
<dbReference type="CDD" id="cd02232">
    <property type="entry name" value="cupin_ARD"/>
    <property type="match status" value="1"/>
</dbReference>
<dbReference type="FunFam" id="2.60.120.10:FF:000031">
    <property type="entry name" value="1,2-dihydroxy-3-keto-5-methylthiopentene dioxygenase"/>
    <property type="match status" value="1"/>
</dbReference>
<dbReference type="Gene3D" id="2.60.120.10">
    <property type="entry name" value="Jelly Rolls"/>
    <property type="match status" value="1"/>
</dbReference>
<dbReference type="HAMAP" id="MF_03154">
    <property type="entry name" value="Salvage_MtnD_euk"/>
    <property type="match status" value="1"/>
</dbReference>
<dbReference type="InterPro" id="IPR004313">
    <property type="entry name" value="ARD"/>
</dbReference>
<dbReference type="InterPro" id="IPR027496">
    <property type="entry name" value="ARD_euk"/>
</dbReference>
<dbReference type="InterPro" id="IPR014710">
    <property type="entry name" value="RmlC-like_jellyroll"/>
</dbReference>
<dbReference type="InterPro" id="IPR011051">
    <property type="entry name" value="RmlC_Cupin_sf"/>
</dbReference>
<dbReference type="PANTHER" id="PTHR23418">
    <property type="entry name" value="ACIREDUCTONE DIOXYGENASE"/>
    <property type="match status" value="1"/>
</dbReference>
<dbReference type="PANTHER" id="PTHR23418:SF0">
    <property type="entry name" value="ACIREDUCTONE DIOXYGENASE"/>
    <property type="match status" value="1"/>
</dbReference>
<dbReference type="Pfam" id="PF03079">
    <property type="entry name" value="ARD"/>
    <property type="match status" value="1"/>
</dbReference>
<dbReference type="SUPFAM" id="SSF51182">
    <property type="entry name" value="RmlC-like cupins"/>
    <property type="match status" value="1"/>
</dbReference>
<protein>
    <recommendedName>
        <fullName evidence="1">Acireductone dioxygenase</fullName>
    </recommendedName>
    <alternativeName>
        <fullName evidence="1">Acireductone dioxygenase (Fe(2+)-requiring)</fullName>
        <shortName evidence="1">ARD'</shortName>
        <shortName evidence="1">Fe-ARD</shortName>
        <ecNumber evidence="1">1.13.11.54</ecNumber>
    </alternativeName>
    <alternativeName>
        <fullName evidence="1">Acireductone dioxygenase (Ni(2+)-requiring)</fullName>
        <shortName evidence="1">ARD</shortName>
        <shortName evidence="1">Ni-ARD</shortName>
        <ecNumber evidence="1">1.13.11.53</ecNumber>
    </alternativeName>
</protein>
<organism>
    <name type="scientific">Ixodes scapularis</name>
    <name type="common">Black-legged tick</name>
    <name type="synonym">Deer tick</name>
    <dbReference type="NCBI Taxonomy" id="6945"/>
    <lineage>
        <taxon>Eukaryota</taxon>
        <taxon>Metazoa</taxon>
        <taxon>Ecdysozoa</taxon>
        <taxon>Arthropoda</taxon>
        <taxon>Chelicerata</taxon>
        <taxon>Arachnida</taxon>
        <taxon>Acari</taxon>
        <taxon>Parasitiformes</taxon>
        <taxon>Ixodida</taxon>
        <taxon>Ixodoidea</taxon>
        <taxon>Ixodidae</taxon>
        <taxon>Ixodinae</taxon>
        <taxon>Ixodes</taxon>
    </lineage>
</organism>
<sequence>MVQAWYMDSDTTTDQREEHQLDPPVPVSIDEVRDKSGVLYWKLNADTYEQDGELEKIRKDRGYSYTDVIEISRDKLPNYEDKIKTFFQEHLHSDEEIRFILAGSGYFDVRDCEDKWIRIQVTRGDLLVLPAGIYHRFTLDKQNYIKAMRLFVGEPVWTPINRPADEHPARFQYIESLRQGIMV</sequence>
<feature type="chain" id="PRO_0000414333" description="Acireductone dioxygenase">
    <location>
        <begin position="1"/>
        <end position="183"/>
    </location>
</feature>
<feature type="region of interest" description="Disordered" evidence="2">
    <location>
        <begin position="1"/>
        <end position="21"/>
    </location>
</feature>
<feature type="binding site" evidence="1">
    <location>
        <position position="90"/>
    </location>
    <ligand>
        <name>Fe(2+)</name>
        <dbReference type="ChEBI" id="CHEBI:29033"/>
        <note>for iron-dependent acireductone dioxygenase activity</note>
    </ligand>
</feature>
<feature type="binding site" evidence="1">
    <location>
        <position position="90"/>
    </location>
    <ligand>
        <name>Ni(2+)</name>
        <dbReference type="ChEBI" id="CHEBI:49786"/>
        <note>for nickel-dependent acireductone dioxygenase activity</note>
    </ligand>
</feature>
<feature type="binding site" evidence="1">
    <location>
        <position position="92"/>
    </location>
    <ligand>
        <name>Fe(2+)</name>
        <dbReference type="ChEBI" id="CHEBI:29033"/>
        <note>for iron-dependent acireductone dioxygenase activity</note>
    </ligand>
</feature>
<feature type="binding site" evidence="1">
    <location>
        <position position="92"/>
    </location>
    <ligand>
        <name>Ni(2+)</name>
        <dbReference type="ChEBI" id="CHEBI:49786"/>
        <note>for nickel-dependent acireductone dioxygenase activity</note>
    </ligand>
</feature>
<feature type="binding site" evidence="1">
    <location>
        <position position="96"/>
    </location>
    <ligand>
        <name>Fe(2+)</name>
        <dbReference type="ChEBI" id="CHEBI:29033"/>
        <note>for iron-dependent acireductone dioxygenase activity</note>
    </ligand>
</feature>
<feature type="binding site" evidence="1">
    <location>
        <position position="96"/>
    </location>
    <ligand>
        <name>Ni(2+)</name>
        <dbReference type="ChEBI" id="CHEBI:49786"/>
        <note>for nickel-dependent acireductone dioxygenase activity</note>
    </ligand>
</feature>
<feature type="binding site" evidence="1">
    <location>
        <position position="135"/>
    </location>
    <ligand>
        <name>Fe(2+)</name>
        <dbReference type="ChEBI" id="CHEBI:29033"/>
        <note>for iron-dependent acireductone dioxygenase activity</note>
    </ligand>
</feature>
<feature type="binding site" evidence="1">
    <location>
        <position position="135"/>
    </location>
    <ligand>
        <name>Ni(2+)</name>
        <dbReference type="ChEBI" id="CHEBI:49786"/>
        <note>for nickel-dependent acireductone dioxygenase activity</note>
    </ligand>
</feature>
<keyword id="KW-0028">Amino-acid biosynthesis</keyword>
<keyword id="KW-0963">Cytoplasm</keyword>
<keyword id="KW-0223">Dioxygenase</keyword>
<keyword id="KW-0408">Iron</keyword>
<keyword id="KW-0479">Metal-binding</keyword>
<keyword id="KW-0486">Methionine biosynthesis</keyword>
<keyword id="KW-0533">Nickel</keyword>
<keyword id="KW-0539">Nucleus</keyword>
<keyword id="KW-0560">Oxidoreductase</keyword>
<keyword id="KW-1185">Reference proteome</keyword>
<gene>
    <name type="ORF">IscW_ISCW007295</name>
</gene>
<accession>B7PRF6</accession>
<reference key="1">
    <citation type="submission" date="2008-03" db="EMBL/GenBank/DDBJ databases">
        <title>Annotation of Ixodes scapularis.</title>
        <authorList>
            <consortium name="Ixodes scapularis Genome Project Consortium"/>
            <person name="Caler E."/>
            <person name="Hannick L.I."/>
            <person name="Bidwell S."/>
            <person name="Joardar V."/>
            <person name="Thiagarajan M."/>
            <person name="Amedeo P."/>
            <person name="Galinsky K.J."/>
            <person name="Schobel S."/>
            <person name="Inman J."/>
            <person name="Hostetler J."/>
            <person name="Miller J."/>
            <person name="Hammond M."/>
            <person name="Megy K."/>
            <person name="Lawson D."/>
            <person name="Kodira C."/>
            <person name="Sutton G."/>
            <person name="Meyer J."/>
            <person name="Hill C.A."/>
            <person name="Birren B."/>
            <person name="Nene V."/>
            <person name="Collins F."/>
            <person name="Alarcon-Chaidez F."/>
            <person name="Wikel S."/>
            <person name="Strausberg R."/>
        </authorList>
    </citation>
    <scope>NUCLEOTIDE SEQUENCE [LARGE SCALE GENOMIC DNA]</scope>
    <source>
        <strain>Wikel</strain>
    </source>
</reference>
<name>MTND_IXOSC</name>
<evidence type="ECO:0000255" key="1">
    <source>
        <dbReference type="HAMAP-Rule" id="MF_03154"/>
    </source>
</evidence>
<evidence type="ECO:0000256" key="2">
    <source>
        <dbReference type="SAM" id="MobiDB-lite"/>
    </source>
</evidence>
<comment type="function">
    <text evidence="1">Catalyzes 2 different reactions between oxygen and the acireductone 1,2-dihydroxy-3-keto-5-methylthiopentene (DHK-MTPene) depending upon the metal bound in the active site. Fe-containing acireductone dioxygenase (Fe-ARD) produces formate and 2-keto-4-methylthiobutyrate (KMTB), the alpha-ketoacid precursor of methionine in the methionine recycle pathway. Ni-containing acireductone dioxygenase (Ni-ARD) produces methylthiopropionate, carbon monoxide and formate, and does not lie on the methionine recycle pathway.</text>
</comment>
<comment type="catalytic activity">
    <reaction evidence="1">
        <text>1,2-dihydroxy-5-(methylsulfanyl)pent-1-en-3-one + O2 = 4-methylsulfanyl-2-oxobutanoate + formate + 2 H(+)</text>
        <dbReference type="Rhea" id="RHEA:24504"/>
        <dbReference type="ChEBI" id="CHEBI:15378"/>
        <dbReference type="ChEBI" id="CHEBI:15379"/>
        <dbReference type="ChEBI" id="CHEBI:15740"/>
        <dbReference type="ChEBI" id="CHEBI:16723"/>
        <dbReference type="ChEBI" id="CHEBI:49252"/>
        <dbReference type="EC" id="1.13.11.54"/>
    </reaction>
</comment>
<comment type="catalytic activity">
    <reaction evidence="1">
        <text>1,2-dihydroxy-5-(methylsulfanyl)pent-1-en-3-one + O2 = 3-(methylsulfanyl)propanoate + CO + formate + 2 H(+)</text>
        <dbReference type="Rhea" id="RHEA:14161"/>
        <dbReference type="ChEBI" id="CHEBI:15378"/>
        <dbReference type="ChEBI" id="CHEBI:15379"/>
        <dbReference type="ChEBI" id="CHEBI:15740"/>
        <dbReference type="ChEBI" id="CHEBI:17245"/>
        <dbReference type="ChEBI" id="CHEBI:49016"/>
        <dbReference type="ChEBI" id="CHEBI:49252"/>
        <dbReference type="EC" id="1.13.11.53"/>
    </reaction>
</comment>
<comment type="cofactor">
    <cofactor evidence="1">
        <name>Fe(2+)</name>
        <dbReference type="ChEBI" id="CHEBI:29033"/>
    </cofactor>
    <cofactor evidence="1">
        <name>Ni(2+)</name>
        <dbReference type="ChEBI" id="CHEBI:49786"/>
    </cofactor>
    <text evidence="1">Binds either 1 Fe or Ni cation per monomer. Iron-binding promotes an acireductone dioxygenase reaction producing 2-keto-4-methylthiobutyrate, while nickel-binding promotes an acireductone dioxygenase reaction producing 3-(methylsulfanyl)propanoate.</text>
</comment>
<comment type="pathway">
    <text evidence="1">Amino-acid biosynthesis; L-methionine biosynthesis via salvage pathway; L-methionine from S-methyl-5-thio-alpha-D-ribose 1-phosphate: step 5/6.</text>
</comment>
<comment type="subcellular location">
    <subcellularLocation>
        <location evidence="1">Cytoplasm</location>
    </subcellularLocation>
    <subcellularLocation>
        <location evidence="1">Nucleus</location>
    </subcellularLocation>
</comment>
<comment type="similarity">
    <text evidence="1">Belongs to the acireductone dioxygenase (ARD) family.</text>
</comment>
<proteinExistence type="inferred from homology"/>